<name>ODO1_BACC3</name>
<protein>
    <recommendedName>
        <fullName evidence="1">2-oxoglutarate dehydrogenase E1 component</fullName>
        <ecNumber evidence="1">1.2.4.2</ecNumber>
    </recommendedName>
    <alternativeName>
        <fullName evidence="1">Alpha-ketoglutarate dehydrogenase</fullName>
    </alternativeName>
</protein>
<evidence type="ECO:0000255" key="1">
    <source>
        <dbReference type="HAMAP-Rule" id="MF_01169"/>
    </source>
</evidence>
<comment type="function">
    <text evidence="1">E1 component of the 2-oxoglutarate dehydrogenase (OGDH) complex which catalyzes the decarboxylation of 2-oxoglutarate, the first step in the conversion of 2-oxoglutarate to succinyl-CoA and CO(2).</text>
</comment>
<comment type="catalytic activity">
    <reaction evidence="1">
        <text>N(6)-[(R)-lipoyl]-L-lysyl-[protein] + 2-oxoglutarate + H(+) = N(6)-[(R)-S(8)-succinyldihydrolipoyl]-L-lysyl-[protein] + CO2</text>
        <dbReference type="Rhea" id="RHEA:12188"/>
        <dbReference type="Rhea" id="RHEA-COMP:10474"/>
        <dbReference type="Rhea" id="RHEA-COMP:20092"/>
        <dbReference type="ChEBI" id="CHEBI:15378"/>
        <dbReference type="ChEBI" id="CHEBI:16526"/>
        <dbReference type="ChEBI" id="CHEBI:16810"/>
        <dbReference type="ChEBI" id="CHEBI:83099"/>
        <dbReference type="ChEBI" id="CHEBI:83120"/>
        <dbReference type="EC" id="1.2.4.2"/>
    </reaction>
</comment>
<comment type="cofactor">
    <cofactor evidence="1">
        <name>thiamine diphosphate</name>
        <dbReference type="ChEBI" id="CHEBI:58937"/>
    </cofactor>
</comment>
<comment type="subunit">
    <text evidence="1">Homodimer. Part of the 2-oxoglutarate dehydrogenase (OGDH) complex composed of E1 (2-oxoglutarate dehydrogenase), E2 (dihydrolipoamide succinyltransferase) and E3 (dihydrolipoamide dehydrogenase); the complex contains multiple copies of the three enzymatic components (E1, E2 and E3).</text>
</comment>
<comment type="similarity">
    <text evidence="1">Belongs to the alpha-ketoglutarate dehydrogenase family.</text>
</comment>
<accession>C1ELG5</accession>
<reference key="1">
    <citation type="submission" date="2009-02" db="EMBL/GenBank/DDBJ databases">
        <title>Genome sequence of Bacillus cereus 03BB102.</title>
        <authorList>
            <person name="Dodson R.J."/>
            <person name="Jackson P."/>
            <person name="Munk A.C."/>
            <person name="Brettin T."/>
            <person name="Bruce D."/>
            <person name="Detter C."/>
            <person name="Tapia R."/>
            <person name="Han C."/>
            <person name="Sutton G."/>
            <person name="Sims D."/>
        </authorList>
    </citation>
    <scope>NUCLEOTIDE SEQUENCE [LARGE SCALE GENOMIC DNA]</scope>
    <source>
        <strain>03BB102</strain>
    </source>
</reference>
<gene>
    <name evidence="1" type="primary">odhA</name>
    <name type="ordered locus">BCA_1297</name>
</gene>
<proteinExistence type="inferred from homology"/>
<keyword id="KW-0324">Glycolysis</keyword>
<keyword id="KW-0560">Oxidoreductase</keyword>
<keyword id="KW-0786">Thiamine pyrophosphate</keyword>
<feature type="chain" id="PRO_1000164358" description="2-oxoglutarate dehydrogenase E1 component">
    <location>
        <begin position="1"/>
        <end position="955"/>
    </location>
</feature>
<dbReference type="EC" id="1.2.4.2" evidence="1"/>
<dbReference type="EMBL" id="CP001407">
    <property type="protein sequence ID" value="ACO26386.1"/>
    <property type="molecule type" value="Genomic_DNA"/>
</dbReference>
<dbReference type="RefSeq" id="WP_000197169.1">
    <property type="nucleotide sequence ID" value="NZ_CP009318.1"/>
</dbReference>
<dbReference type="SMR" id="C1ELG5"/>
<dbReference type="KEGG" id="bcx:BCA_1297"/>
<dbReference type="PATRIC" id="fig|572264.18.peg.1248"/>
<dbReference type="Proteomes" id="UP000002210">
    <property type="component" value="Chromosome"/>
</dbReference>
<dbReference type="GO" id="GO:0005829">
    <property type="term" value="C:cytosol"/>
    <property type="evidence" value="ECO:0007669"/>
    <property type="project" value="TreeGrafter"/>
</dbReference>
<dbReference type="GO" id="GO:0045252">
    <property type="term" value="C:oxoglutarate dehydrogenase complex"/>
    <property type="evidence" value="ECO:0007669"/>
    <property type="project" value="TreeGrafter"/>
</dbReference>
<dbReference type="GO" id="GO:0004591">
    <property type="term" value="F:oxoglutarate dehydrogenase (succinyl-transferring) activity"/>
    <property type="evidence" value="ECO:0007669"/>
    <property type="project" value="UniProtKB-UniRule"/>
</dbReference>
<dbReference type="GO" id="GO:0030976">
    <property type="term" value="F:thiamine pyrophosphate binding"/>
    <property type="evidence" value="ECO:0007669"/>
    <property type="project" value="UniProtKB-UniRule"/>
</dbReference>
<dbReference type="GO" id="GO:0006096">
    <property type="term" value="P:glycolytic process"/>
    <property type="evidence" value="ECO:0007669"/>
    <property type="project" value="UniProtKB-UniRule"/>
</dbReference>
<dbReference type="GO" id="GO:0006099">
    <property type="term" value="P:tricarboxylic acid cycle"/>
    <property type="evidence" value="ECO:0007669"/>
    <property type="project" value="TreeGrafter"/>
</dbReference>
<dbReference type="CDD" id="cd02016">
    <property type="entry name" value="TPP_E1_OGDC_like"/>
    <property type="match status" value="1"/>
</dbReference>
<dbReference type="FunFam" id="3.40.50.11610:FF:000002">
    <property type="entry name" value="2-oxoglutarate dehydrogenase E1 component"/>
    <property type="match status" value="1"/>
</dbReference>
<dbReference type="FunFam" id="3.40.50.970:FF:000036">
    <property type="entry name" value="2-oxoglutarate dehydrogenase E1 component"/>
    <property type="match status" value="1"/>
</dbReference>
<dbReference type="Gene3D" id="3.40.50.12470">
    <property type="match status" value="1"/>
</dbReference>
<dbReference type="Gene3D" id="3.40.50.970">
    <property type="match status" value="1"/>
</dbReference>
<dbReference type="Gene3D" id="3.40.50.11610">
    <property type="entry name" value="Multifunctional 2-oxoglutarate metabolism enzyme, C-terminal domain"/>
    <property type="match status" value="1"/>
</dbReference>
<dbReference type="HAMAP" id="MF_01169">
    <property type="entry name" value="SucA_OdhA"/>
    <property type="match status" value="1"/>
</dbReference>
<dbReference type="InterPro" id="IPR011603">
    <property type="entry name" value="2oxoglutarate_DH_E1"/>
</dbReference>
<dbReference type="InterPro" id="IPR023784">
    <property type="entry name" value="2oxoglutarate_DH_E1_bac"/>
</dbReference>
<dbReference type="InterPro" id="IPR001017">
    <property type="entry name" value="DH_E1"/>
</dbReference>
<dbReference type="InterPro" id="IPR042179">
    <property type="entry name" value="KGD_C_sf"/>
</dbReference>
<dbReference type="InterPro" id="IPR031717">
    <property type="entry name" value="ODO-1/KGD_C"/>
</dbReference>
<dbReference type="InterPro" id="IPR029061">
    <property type="entry name" value="THDP-binding"/>
</dbReference>
<dbReference type="InterPro" id="IPR005475">
    <property type="entry name" value="Transketolase-like_Pyr-bd"/>
</dbReference>
<dbReference type="NCBIfam" id="TIGR00239">
    <property type="entry name" value="2oxo_dh_E1"/>
    <property type="match status" value="1"/>
</dbReference>
<dbReference type="NCBIfam" id="NF006914">
    <property type="entry name" value="PRK09404.1"/>
    <property type="match status" value="1"/>
</dbReference>
<dbReference type="NCBIfam" id="NF008907">
    <property type="entry name" value="PRK12270.1"/>
    <property type="match status" value="1"/>
</dbReference>
<dbReference type="PANTHER" id="PTHR23152:SF4">
    <property type="entry name" value="2-OXOADIPATE DEHYDROGENASE COMPLEX COMPONENT E1"/>
    <property type="match status" value="1"/>
</dbReference>
<dbReference type="PANTHER" id="PTHR23152">
    <property type="entry name" value="2-OXOGLUTARATE DEHYDROGENASE"/>
    <property type="match status" value="1"/>
</dbReference>
<dbReference type="Pfam" id="PF00676">
    <property type="entry name" value="E1_dh"/>
    <property type="match status" value="1"/>
</dbReference>
<dbReference type="Pfam" id="PF16870">
    <property type="entry name" value="OxoGdeHyase_C"/>
    <property type="match status" value="1"/>
</dbReference>
<dbReference type="Pfam" id="PF02779">
    <property type="entry name" value="Transket_pyr"/>
    <property type="match status" value="1"/>
</dbReference>
<dbReference type="PIRSF" id="PIRSF000157">
    <property type="entry name" value="Oxoglu_dh_E1"/>
    <property type="match status" value="1"/>
</dbReference>
<dbReference type="SMART" id="SM00861">
    <property type="entry name" value="Transket_pyr"/>
    <property type="match status" value="1"/>
</dbReference>
<dbReference type="SUPFAM" id="SSF52518">
    <property type="entry name" value="Thiamin diphosphate-binding fold (THDP-binding)"/>
    <property type="match status" value="2"/>
</dbReference>
<organism>
    <name type="scientific">Bacillus cereus (strain 03BB102)</name>
    <dbReference type="NCBI Taxonomy" id="572264"/>
    <lineage>
        <taxon>Bacteria</taxon>
        <taxon>Bacillati</taxon>
        <taxon>Bacillota</taxon>
        <taxon>Bacilli</taxon>
        <taxon>Bacillales</taxon>
        <taxon>Bacillaceae</taxon>
        <taxon>Bacillus</taxon>
        <taxon>Bacillus cereus group</taxon>
    </lineage>
</organism>
<sequence length="955" mass="106482">MTRKNTTTNPWAKFHGPNLGYVIEQYDLYVTGAGSVDPELQELFEIFGAPSFQDDVVTGDNTATHFSPQNTGNIEKILKVVQLVEQIRSFGHTLAHINPMEDAANGQSLLERAMNELSDADLKAIPAKTVWQDAPEGIHTALDVIHRLKEVYTQSLAYEFSHIQDSEERAWLHQMVESNSLRQPLSNQKRTALLKRLTAVEGFEQFLHKTFVGQKRFSIEGVDMLVPVLDEIVLEGAKNGVEDVMIGMAHRGRLSVLAHVLEKPYSHMFAEFKHAKIEGAVANSGWTGDVKYHLGREQVVSNEEVSTRVTLANNPSHLEFVNPVVEGFARAAQENRKKSGLPEQDTSKSFVILVHGDAAFPGQGIVSETLNLSRLNAYQTGGTIHVIANNAVGFTTDSYDSRSTKYSSDLAKGFDIPIVHVNADDPEACLAAANLAIQYRMLFKKDFLIDLIGYRRYGHNEMDDPAVTQPQVYKKIKNHPTVRAIYADQLQAAGVLNADEIETITQFTQEQLKSDYAQVPPADTSDATIHVKVPDVVAKGIQSIDTGVELDSLRAINEGLLSWPEGFNVYPKVKKILERRKDALEENGKIEWALAESLAFASILQEGTPIRLTGQDSQRGTFAHRHIVLHDTDTNETYSPLHRLPNINASFSVHNSPLSEAAVVGYEYGYNVFAPETLVMWEAQYGDFSNTAQALFDQYVSAGRAKWGQKSGLVLLLPHGYEGQGPEHSSARPERFLQLAAENNWTVANLTSAAQYFHILRRQASILGTEAVRPLVLMTPKSLLRHPLTLSTASQLSEGRFQPALEQENLGTKPNKVKRLVLSTGKMAIDLAAEIESGKHEYNLDEIHIVRIEQLYPFPAEKVQSIIKRFKNLEEIIWVQEEPRNMGAWHYMAPILFELAGDKVKTGYIGRPDRSSPSGGDPFAHKAEQELIVSHALDVKYNFRQDKLEIEVFSN</sequence>